<organism>
    <name type="scientific">Synechococcus elongatus (strain ATCC 33912 / PCC 7942 / FACHB-805)</name>
    <name type="common">Anacystis nidulans R2</name>
    <dbReference type="NCBI Taxonomy" id="1140"/>
    <lineage>
        <taxon>Bacteria</taxon>
        <taxon>Bacillati</taxon>
        <taxon>Cyanobacteriota</taxon>
        <taxon>Cyanophyceae</taxon>
        <taxon>Synechococcales</taxon>
        <taxon>Synechococcaceae</taxon>
        <taxon>Synechococcus</taxon>
    </lineage>
</organism>
<accession>Q31M94</accession>
<feature type="chain" id="PRO_1000002176" description="SsrA-binding protein">
    <location>
        <begin position="1"/>
        <end position="154"/>
    </location>
</feature>
<feature type="region of interest" description="Disordered" evidence="2">
    <location>
        <begin position="130"/>
        <end position="154"/>
    </location>
</feature>
<feature type="compositionally biased region" description="Basic and acidic residues" evidence="2">
    <location>
        <begin position="133"/>
        <end position="154"/>
    </location>
</feature>
<gene>
    <name evidence="1" type="primary">smpB</name>
    <name type="ordered locus">Synpcc7942_1795</name>
</gene>
<proteinExistence type="inferred from homology"/>
<sequence length="154" mass="17920">MADSGGIKVLSENRQARFQYEILETFETGIELLGTEVKSIRAGKVNLRDGFALVRNGEVWLHNIHISPHQQASAYYNHDPLRTRKLLMHREEIRKLIGKVEQKGLTLVPLKMYLKQGWVKVTLGLGRGKKLHDKRETERRRQDQRDIQRAIKRA</sequence>
<name>SSRP_SYNE7</name>
<reference key="1">
    <citation type="submission" date="2005-08" db="EMBL/GenBank/DDBJ databases">
        <title>Complete sequence of chromosome 1 of Synechococcus elongatus PCC 7942.</title>
        <authorList>
            <consortium name="US DOE Joint Genome Institute"/>
            <person name="Copeland A."/>
            <person name="Lucas S."/>
            <person name="Lapidus A."/>
            <person name="Barry K."/>
            <person name="Detter J.C."/>
            <person name="Glavina T."/>
            <person name="Hammon N."/>
            <person name="Israni S."/>
            <person name="Pitluck S."/>
            <person name="Schmutz J."/>
            <person name="Larimer F."/>
            <person name="Land M."/>
            <person name="Kyrpides N."/>
            <person name="Lykidis A."/>
            <person name="Golden S."/>
            <person name="Richardson P."/>
        </authorList>
    </citation>
    <scope>NUCLEOTIDE SEQUENCE [LARGE SCALE GENOMIC DNA]</scope>
    <source>
        <strain>ATCC 33912 / PCC 7942 / FACHB-805</strain>
    </source>
</reference>
<keyword id="KW-0963">Cytoplasm</keyword>
<keyword id="KW-1185">Reference proteome</keyword>
<keyword id="KW-0694">RNA-binding</keyword>
<evidence type="ECO:0000255" key="1">
    <source>
        <dbReference type="HAMAP-Rule" id="MF_00023"/>
    </source>
</evidence>
<evidence type="ECO:0000256" key="2">
    <source>
        <dbReference type="SAM" id="MobiDB-lite"/>
    </source>
</evidence>
<protein>
    <recommendedName>
        <fullName evidence="1">SsrA-binding protein</fullName>
    </recommendedName>
    <alternativeName>
        <fullName evidence="1">Small protein B</fullName>
    </alternativeName>
</protein>
<comment type="function">
    <text evidence="1">Required for rescue of stalled ribosomes mediated by trans-translation. Binds to transfer-messenger RNA (tmRNA), required for stable association of tmRNA with ribosomes. tmRNA and SmpB together mimic tRNA shape, replacing the anticodon stem-loop with SmpB. tmRNA is encoded by the ssrA gene; the 2 termini fold to resemble tRNA(Ala) and it encodes a 'tag peptide', a short internal open reading frame. During trans-translation Ala-aminoacylated tmRNA acts like a tRNA, entering the A-site of stalled ribosomes, displacing the stalled mRNA. The ribosome then switches to translate the ORF on the tmRNA; the nascent peptide is terminated with the 'tag peptide' encoded by the tmRNA and targeted for degradation. The ribosome is freed to recommence translation, which seems to be the essential function of trans-translation.</text>
</comment>
<comment type="subcellular location">
    <subcellularLocation>
        <location evidence="1">Cytoplasm</location>
    </subcellularLocation>
    <text evidence="1">The tmRNA-SmpB complex associates with stalled 70S ribosomes.</text>
</comment>
<comment type="similarity">
    <text evidence="1">Belongs to the SmpB family.</text>
</comment>
<dbReference type="EMBL" id="CP000100">
    <property type="protein sequence ID" value="ABB57825.1"/>
    <property type="molecule type" value="Genomic_DNA"/>
</dbReference>
<dbReference type="RefSeq" id="WP_011244608.1">
    <property type="nucleotide sequence ID" value="NZ_JACJTX010000001.1"/>
</dbReference>
<dbReference type="SMR" id="Q31M94"/>
<dbReference type="STRING" id="1140.Synpcc7942_1795"/>
<dbReference type="PaxDb" id="1140-Synpcc7942_1795"/>
<dbReference type="GeneID" id="72430666"/>
<dbReference type="KEGG" id="syf:Synpcc7942_1795"/>
<dbReference type="eggNOG" id="COG0691">
    <property type="taxonomic scope" value="Bacteria"/>
</dbReference>
<dbReference type="HOGENOM" id="CLU_108953_0_1_3"/>
<dbReference type="OrthoDB" id="9805462at2"/>
<dbReference type="BioCyc" id="SYNEL:SYNPCC7942_1795-MONOMER"/>
<dbReference type="Proteomes" id="UP000889800">
    <property type="component" value="Chromosome"/>
</dbReference>
<dbReference type="GO" id="GO:0005829">
    <property type="term" value="C:cytosol"/>
    <property type="evidence" value="ECO:0007669"/>
    <property type="project" value="TreeGrafter"/>
</dbReference>
<dbReference type="GO" id="GO:0003723">
    <property type="term" value="F:RNA binding"/>
    <property type="evidence" value="ECO:0007669"/>
    <property type="project" value="UniProtKB-UniRule"/>
</dbReference>
<dbReference type="GO" id="GO:0070929">
    <property type="term" value="P:trans-translation"/>
    <property type="evidence" value="ECO:0007669"/>
    <property type="project" value="UniProtKB-UniRule"/>
</dbReference>
<dbReference type="CDD" id="cd09294">
    <property type="entry name" value="SmpB"/>
    <property type="match status" value="1"/>
</dbReference>
<dbReference type="Gene3D" id="2.40.280.10">
    <property type="match status" value="1"/>
</dbReference>
<dbReference type="HAMAP" id="MF_00023">
    <property type="entry name" value="SmpB"/>
    <property type="match status" value="1"/>
</dbReference>
<dbReference type="InterPro" id="IPR023620">
    <property type="entry name" value="SmpB"/>
</dbReference>
<dbReference type="InterPro" id="IPR000037">
    <property type="entry name" value="SsrA-bd_prot"/>
</dbReference>
<dbReference type="InterPro" id="IPR020081">
    <property type="entry name" value="SsrA-bd_prot_CS"/>
</dbReference>
<dbReference type="NCBIfam" id="NF003843">
    <property type="entry name" value="PRK05422.1"/>
    <property type="match status" value="1"/>
</dbReference>
<dbReference type="NCBIfam" id="TIGR00086">
    <property type="entry name" value="smpB"/>
    <property type="match status" value="1"/>
</dbReference>
<dbReference type="PANTHER" id="PTHR30308:SF2">
    <property type="entry name" value="SSRA-BINDING PROTEIN"/>
    <property type="match status" value="1"/>
</dbReference>
<dbReference type="PANTHER" id="PTHR30308">
    <property type="entry name" value="TMRNA-BINDING COMPONENT OF TRANS-TRANSLATION TAGGING COMPLEX"/>
    <property type="match status" value="1"/>
</dbReference>
<dbReference type="Pfam" id="PF01668">
    <property type="entry name" value="SmpB"/>
    <property type="match status" value="1"/>
</dbReference>
<dbReference type="SUPFAM" id="SSF74982">
    <property type="entry name" value="Small protein B (SmpB)"/>
    <property type="match status" value="1"/>
</dbReference>
<dbReference type="PROSITE" id="PS01317">
    <property type="entry name" value="SSRP"/>
    <property type="match status" value="1"/>
</dbReference>